<organism>
    <name type="scientific">Bacillus cereus (strain ATCC 10987 / NRS 248)</name>
    <dbReference type="NCBI Taxonomy" id="222523"/>
    <lineage>
        <taxon>Bacteria</taxon>
        <taxon>Bacillati</taxon>
        <taxon>Bacillota</taxon>
        <taxon>Bacilli</taxon>
        <taxon>Bacillales</taxon>
        <taxon>Bacillaceae</taxon>
        <taxon>Bacillus</taxon>
        <taxon>Bacillus cereus group</taxon>
    </lineage>
</organism>
<sequence length="354" mass="39990">MSLDKIMNEAISPWMKGDGPDSDIVLSSRIRLARNFKKYQFSTMQNEEEAKLIQELFKKEFINKTVEPFGEFELLKMNELTPLQRRVLVEKHLISPNLAGTEYGACLLSESEHISVMLNEEDHIRIQCLFSGLQLSEALQSANQIDNWIEKEVEYAFDESLGYITSCPTNVGTGLRASVMIHLPGLVLTKRISRIIQVIQKLGLVVRGIYGEGSEALGNIFQVSNQMTLGKSEEDIIADLKSVIQQIIQQEKMARELIVQNSSIELEDKVYRSYGILANSRLIQSAEAANCLSDLRLGIDLGYIKGISRNILTELMVLTQPGILQQYAGGPLGPEERDYRRATLIRERLRIEKN</sequence>
<keyword id="KW-0021">Allosteric enzyme</keyword>
<keyword id="KW-0067">ATP-binding</keyword>
<keyword id="KW-0418">Kinase</keyword>
<keyword id="KW-0547">Nucleotide-binding</keyword>
<keyword id="KW-0808">Transferase</keyword>
<evidence type="ECO:0000255" key="1">
    <source>
        <dbReference type="HAMAP-Rule" id="MF_00602"/>
    </source>
</evidence>
<comment type="function">
    <text evidence="1">Catalyzes the specific phosphorylation of arginine residues in a large number of proteins. Is part of the bacterial stress response system. Protein arginine phosphorylation has a physiologically important role and is involved in the regulation of many critical cellular processes, such as protein homeostasis, motility, competence, and stringent and stress responses, by regulating gene expression and protein activity.</text>
</comment>
<comment type="catalytic activity">
    <reaction evidence="1">
        <text>L-arginyl-[protein] + ATP = N(omega)-phospho-L-arginyl-[protein] + ADP + H(+)</text>
        <dbReference type="Rhea" id="RHEA:43384"/>
        <dbReference type="Rhea" id="RHEA-COMP:10532"/>
        <dbReference type="Rhea" id="RHEA-COMP:10533"/>
        <dbReference type="ChEBI" id="CHEBI:15378"/>
        <dbReference type="ChEBI" id="CHEBI:29965"/>
        <dbReference type="ChEBI" id="CHEBI:30616"/>
        <dbReference type="ChEBI" id="CHEBI:83226"/>
        <dbReference type="ChEBI" id="CHEBI:456216"/>
        <dbReference type="EC" id="2.7.14.1"/>
    </reaction>
</comment>
<comment type="activity regulation">
    <text evidence="1">Appears to be allosterically activated by the binding of pArg-containing polypeptides to the pArg-binding pocket localized in the C-terminal domain of McsB.</text>
</comment>
<comment type="similarity">
    <text evidence="1">Belongs to the ATP:guanido phosphotransferase family.</text>
</comment>
<accession>Q73FC6</accession>
<proteinExistence type="inferred from homology"/>
<gene>
    <name evidence="1" type="primary">mcsB</name>
    <name type="ordered locus">BCE_0080</name>
</gene>
<feature type="chain" id="PRO_0000212012" description="Protein-arginine kinase">
    <location>
        <begin position="1"/>
        <end position="354"/>
    </location>
</feature>
<feature type="domain" description="Phosphagen kinase C-terminal" evidence="1">
    <location>
        <begin position="24"/>
        <end position="254"/>
    </location>
</feature>
<feature type="short sequence motif" description="RDXXRA motif of the pArg binding pocket involved in allosteric regulation" evidence="1">
    <location>
        <begin position="337"/>
        <end position="342"/>
    </location>
</feature>
<feature type="binding site" evidence="1">
    <location>
        <begin position="27"/>
        <end position="31"/>
    </location>
    <ligand>
        <name>ATP</name>
        <dbReference type="ChEBI" id="CHEBI:30616"/>
    </ligand>
</feature>
<feature type="binding site" evidence="1">
    <location>
        <position position="92"/>
    </location>
    <ligand>
        <name>ATP</name>
        <dbReference type="ChEBI" id="CHEBI:30616"/>
    </ligand>
</feature>
<feature type="binding site" evidence="1">
    <location>
        <position position="125"/>
    </location>
    <ligand>
        <name>ATP</name>
        <dbReference type="ChEBI" id="CHEBI:30616"/>
    </ligand>
</feature>
<feature type="binding site" evidence="1">
    <location>
        <begin position="176"/>
        <end position="180"/>
    </location>
    <ligand>
        <name>ATP</name>
        <dbReference type="ChEBI" id="CHEBI:30616"/>
    </ligand>
</feature>
<feature type="binding site" evidence="1">
    <location>
        <begin position="207"/>
        <end position="212"/>
    </location>
    <ligand>
        <name>ATP</name>
        <dbReference type="ChEBI" id="CHEBI:30616"/>
    </ligand>
</feature>
<reference key="1">
    <citation type="journal article" date="2004" name="Nucleic Acids Res.">
        <title>The genome sequence of Bacillus cereus ATCC 10987 reveals metabolic adaptations and a large plasmid related to Bacillus anthracis pXO1.</title>
        <authorList>
            <person name="Rasko D.A."/>
            <person name="Ravel J."/>
            <person name="Oekstad O.A."/>
            <person name="Helgason E."/>
            <person name="Cer R.Z."/>
            <person name="Jiang L."/>
            <person name="Shores K.A."/>
            <person name="Fouts D.E."/>
            <person name="Tourasse N.J."/>
            <person name="Angiuoli S.V."/>
            <person name="Kolonay J.F."/>
            <person name="Nelson W.C."/>
            <person name="Kolstoe A.-B."/>
            <person name="Fraser C.M."/>
            <person name="Read T.D."/>
        </authorList>
    </citation>
    <scope>NUCLEOTIDE SEQUENCE [LARGE SCALE GENOMIC DNA]</scope>
    <source>
        <strain>ATCC 10987 / NRS 248</strain>
    </source>
</reference>
<dbReference type="EC" id="2.7.14.1" evidence="1"/>
<dbReference type="EMBL" id="AE017194">
    <property type="protein sequence ID" value="AAS39016.1"/>
    <property type="molecule type" value="Genomic_DNA"/>
</dbReference>
<dbReference type="SMR" id="Q73FC6"/>
<dbReference type="KEGG" id="bca:BCE_0080"/>
<dbReference type="HOGENOM" id="CLU_066591_1_0_9"/>
<dbReference type="Proteomes" id="UP000002527">
    <property type="component" value="Chromosome"/>
</dbReference>
<dbReference type="GO" id="GO:0005615">
    <property type="term" value="C:extracellular space"/>
    <property type="evidence" value="ECO:0007669"/>
    <property type="project" value="TreeGrafter"/>
</dbReference>
<dbReference type="GO" id="GO:0005524">
    <property type="term" value="F:ATP binding"/>
    <property type="evidence" value="ECO:0007669"/>
    <property type="project" value="UniProtKB-KW"/>
</dbReference>
<dbReference type="GO" id="GO:0004111">
    <property type="term" value="F:creatine kinase activity"/>
    <property type="evidence" value="ECO:0007669"/>
    <property type="project" value="InterPro"/>
</dbReference>
<dbReference type="GO" id="GO:0004672">
    <property type="term" value="F:protein kinase activity"/>
    <property type="evidence" value="ECO:0007669"/>
    <property type="project" value="UniProtKB-UniRule"/>
</dbReference>
<dbReference type="GO" id="GO:0046314">
    <property type="term" value="P:phosphocreatine biosynthetic process"/>
    <property type="evidence" value="ECO:0007669"/>
    <property type="project" value="InterPro"/>
</dbReference>
<dbReference type="CDD" id="cd07930">
    <property type="entry name" value="bacterial_phosphagen_kinase"/>
    <property type="match status" value="1"/>
</dbReference>
<dbReference type="FunFam" id="3.30.590.10:FF:000007">
    <property type="entry name" value="Protein-arginine kinase"/>
    <property type="match status" value="1"/>
</dbReference>
<dbReference type="Gene3D" id="3.30.590.10">
    <property type="entry name" value="Glutamine synthetase/guanido kinase, catalytic domain"/>
    <property type="match status" value="1"/>
</dbReference>
<dbReference type="HAMAP" id="MF_00602">
    <property type="entry name" value="Prot_Arg_kinase"/>
    <property type="match status" value="1"/>
</dbReference>
<dbReference type="InterPro" id="IPR023660">
    <property type="entry name" value="Arg_Kinase"/>
</dbReference>
<dbReference type="InterPro" id="IPR000749">
    <property type="entry name" value="ATP-guanido_PTrfase"/>
</dbReference>
<dbReference type="InterPro" id="IPR022415">
    <property type="entry name" value="ATP-guanido_PTrfase_AS"/>
</dbReference>
<dbReference type="InterPro" id="IPR022414">
    <property type="entry name" value="ATP-guanido_PTrfase_cat"/>
</dbReference>
<dbReference type="InterPro" id="IPR014746">
    <property type="entry name" value="Gln_synth/guanido_kin_cat_dom"/>
</dbReference>
<dbReference type="NCBIfam" id="NF002194">
    <property type="entry name" value="PRK01059.1-4"/>
    <property type="match status" value="1"/>
</dbReference>
<dbReference type="NCBIfam" id="NF002195">
    <property type="entry name" value="PRK01059.1-5"/>
    <property type="match status" value="1"/>
</dbReference>
<dbReference type="PANTHER" id="PTHR11547:SF38">
    <property type="entry name" value="ARGININE KINASE 1-RELATED"/>
    <property type="match status" value="1"/>
</dbReference>
<dbReference type="PANTHER" id="PTHR11547">
    <property type="entry name" value="ARGININE OR CREATINE KINASE"/>
    <property type="match status" value="1"/>
</dbReference>
<dbReference type="Pfam" id="PF00217">
    <property type="entry name" value="ATP-gua_Ptrans"/>
    <property type="match status" value="1"/>
</dbReference>
<dbReference type="SUPFAM" id="SSF55931">
    <property type="entry name" value="Glutamine synthetase/guanido kinase"/>
    <property type="match status" value="1"/>
</dbReference>
<dbReference type="PROSITE" id="PS00112">
    <property type="entry name" value="PHOSPHAGEN_KINASE"/>
    <property type="match status" value="1"/>
</dbReference>
<dbReference type="PROSITE" id="PS51510">
    <property type="entry name" value="PHOSPHAGEN_KINASE_C"/>
    <property type="match status" value="1"/>
</dbReference>
<protein>
    <recommendedName>
        <fullName evidence="1">Protein-arginine kinase</fullName>
        <ecNumber evidence="1">2.7.14.1</ecNumber>
    </recommendedName>
</protein>
<name>MCSB_BACC1</name>